<organism>
    <name type="scientific">Bacillus cereus (strain ATCC 10987 / NRS 248)</name>
    <dbReference type="NCBI Taxonomy" id="222523"/>
    <lineage>
        <taxon>Bacteria</taxon>
        <taxon>Bacillati</taxon>
        <taxon>Bacillota</taxon>
        <taxon>Bacilli</taxon>
        <taxon>Bacillales</taxon>
        <taxon>Bacillaceae</taxon>
        <taxon>Bacillus</taxon>
        <taxon>Bacillus cereus group</taxon>
    </lineage>
</organism>
<feature type="chain" id="PRO_0000176225" description="Elongation factor 4">
    <location>
        <begin position="1"/>
        <end position="607"/>
    </location>
</feature>
<feature type="domain" description="tr-type G">
    <location>
        <begin position="11"/>
        <end position="193"/>
    </location>
</feature>
<feature type="binding site" evidence="1">
    <location>
        <begin position="23"/>
        <end position="28"/>
    </location>
    <ligand>
        <name>GTP</name>
        <dbReference type="ChEBI" id="CHEBI:37565"/>
    </ligand>
</feature>
<feature type="binding site" evidence="1">
    <location>
        <begin position="140"/>
        <end position="143"/>
    </location>
    <ligand>
        <name>GTP</name>
        <dbReference type="ChEBI" id="CHEBI:37565"/>
    </ligand>
</feature>
<protein>
    <recommendedName>
        <fullName evidence="1">Elongation factor 4</fullName>
        <shortName evidence="1">EF-4</shortName>
        <ecNumber evidence="1">3.6.5.n1</ecNumber>
    </recommendedName>
    <alternativeName>
        <fullName evidence="1">Ribosomal back-translocase LepA</fullName>
    </alternativeName>
</protein>
<name>LEPA_BACC1</name>
<proteinExistence type="inferred from homology"/>
<sequence>MNKEERAKRQSKIRNFSIIAHIDHGKSTLADRILEKTNALTQREMKAQLLDSMDLERERGITIKLNAVQLNYKAKDGEEYILHLIDTPGHVDFTYEVSRSLAACEGAILVVDAAQGIEAQTLANVYLALDNNLEILPVINKIDLPSADPERVRQEVEDVIGLDASEAVLASAKAGIGIEEILEQIVEKVPAPTGDSEEPLQCMIFDSLYDPYRGVIAYIRVVNGTVKVGDKVRMMATGKEFEVTEVGVFTPKTTQRDELTVGDVGFLAASIKNVGDTRVGDTITHAKRPAAEPLPGYRKLNPMVFCGLYPIDSARYNDLRDALEKLELNDSALEFEPETSQALGFGFRCGFLGLLHMEIIQERIEREFKIDLITTAPSVIYKVFLTNGEDMIVDNPSNMPDPQTIDRVEEPFVKAAIMVPNDYVGAVMEICQGKRGTFIDMQYLDETRVTLTYEIPLSEIVYDFFDQLKSNTKGYASFDYELIGYKPSKLVKMDILLNSEQVDALSFIVHRDSAYDRGKVIVEKLKELIPRQQFEVPIQATIGNKVVARSTIKAMRKNVLAKCYGGDISRKRKLLDKQKEGKKRMKSVGSVEVPQEAFMAVLKMDDN</sequence>
<accession>Q730L6</accession>
<comment type="function">
    <text evidence="1">Required for accurate and efficient protein synthesis under certain stress conditions. May act as a fidelity factor of the translation reaction, by catalyzing a one-codon backward translocation of tRNAs on improperly translocated ribosomes. Back-translocation proceeds from a post-translocation (POST) complex to a pre-translocation (PRE) complex, thus giving elongation factor G a second chance to translocate the tRNAs correctly. Binds to ribosomes in a GTP-dependent manner.</text>
</comment>
<comment type="catalytic activity">
    <reaction evidence="1">
        <text>GTP + H2O = GDP + phosphate + H(+)</text>
        <dbReference type="Rhea" id="RHEA:19669"/>
        <dbReference type="ChEBI" id="CHEBI:15377"/>
        <dbReference type="ChEBI" id="CHEBI:15378"/>
        <dbReference type="ChEBI" id="CHEBI:37565"/>
        <dbReference type="ChEBI" id="CHEBI:43474"/>
        <dbReference type="ChEBI" id="CHEBI:58189"/>
        <dbReference type="EC" id="3.6.5.n1"/>
    </reaction>
</comment>
<comment type="subcellular location">
    <subcellularLocation>
        <location evidence="1">Cell membrane</location>
        <topology evidence="1">Peripheral membrane protein</topology>
        <orientation evidence="1">Cytoplasmic side</orientation>
    </subcellularLocation>
</comment>
<comment type="similarity">
    <text evidence="1">Belongs to the TRAFAC class translation factor GTPase superfamily. Classic translation factor GTPase family. LepA subfamily.</text>
</comment>
<keyword id="KW-1003">Cell membrane</keyword>
<keyword id="KW-0342">GTP-binding</keyword>
<keyword id="KW-0378">Hydrolase</keyword>
<keyword id="KW-0472">Membrane</keyword>
<keyword id="KW-0547">Nucleotide-binding</keyword>
<keyword id="KW-0648">Protein biosynthesis</keyword>
<evidence type="ECO:0000255" key="1">
    <source>
        <dbReference type="HAMAP-Rule" id="MF_00071"/>
    </source>
</evidence>
<reference key="1">
    <citation type="journal article" date="2004" name="Nucleic Acids Res.">
        <title>The genome sequence of Bacillus cereus ATCC 10987 reveals metabolic adaptations and a large plasmid related to Bacillus anthracis pXO1.</title>
        <authorList>
            <person name="Rasko D.A."/>
            <person name="Ravel J."/>
            <person name="Oekstad O.A."/>
            <person name="Helgason E."/>
            <person name="Cer R.Z."/>
            <person name="Jiang L."/>
            <person name="Shores K.A."/>
            <person name="Fouts D.E."/>
            <person name="Tourasse N.J."/>
            <person name="Angiuoli S.V."/>
            <person name="Kolonay J.F."/>
            <person name="Nelson W.C."/>
            <person name="Kolstoe A.-B."/>
            <person name="Fraser C.M."/>
            <person name="Read T.D."/>
        </authorList>
    </citation>
    <scope>NUCLEOTIDE SEQUENCE [LARGE SCALE GENOMIC DNA]</scope>
    <source>
        <strain>ATCC 10987 / NRS 248</strain>
    </source>
</reference>
<gene>
    <name evidence="1" type="primary">lepA</name>
    <name type="ordered locus">BCE_4400</name>
</gene>
<dbReference type="EC" id="3.6.5.n1" evidence="1"/>
<dbReference type="EMBL" id="AE017194">
    <property type="protein sequence ID" value="AAS43301.1"/>
    <property type="molecule type" value="Genomic_DNA"/>
</dbReference>
<dbReference type="SMR" id="Q730L6"/>
<dbReference type="KEGG" id="bca:BCE_4400"/>
<dbReference type="HOGENOM" id="CLU_009995_3_3_9"/>
<dbReference type="Proteomes" id="UP000002527">
    <property type="component" value="Chromosome"/>
</dbReference>
<dbReference type="GO" id="GO:0005886">
    <property type="term" value="C:plasma membrane"/>
    <property type="evidence" value="ECO:0007669"/>
    <property type="project" value="UniProtKB-SubCell"/>
</dbReference>
<dbReference type="GO" id="GO:0005525">
    <property type="term" value="F:GTP binding"/>
    <property type="evidence" value="ECO:0007669"/>
    <property type="project" value="UniProtKB-UniRule"/>
</dbReference>
<dbReference type="GO" id="GO:0003924">
    <property type="term" value="F:GTPase activity"/>
    <property type="evidence" value="ECO:0007669"/>
    <property type="project" value="UniProtKB-UniRule"/>
</dbReference>
<dbReference type="GO" id="GO:0043022">
    <property type="term" value="F:ribosome binding"/>
    <property type="evidence" value="ECO:0007669"/>
    <property type="project" value="UniProtKB-UniRule"/>
</dbReference>
<dbReference type="GO" id="GO:0003746">
    <property type="term" value="F:translation elongation factor activity"/>
    <property type="evidence" value="ECO:0007669"/>
    <property type="project" value="UniProtKB-UniRule"/>
</dbReference>
<dbReference type="GO" id="GO:0045727">
    <property type="term" value="P:positive regulation of translation"/>
    <property type="evidence" value="ECO:0007669"/>
    <property type="project" value="UniProtKB-UniRule"/>
</dbReference>
<dbReference type="CDD" id="cd03699">
    <property type="entry name" value="EF4_II"/>
    <property type="match status" value="1"/>
</dbReference>
<dbReference type="CDD" id="cd16260">
    <property type="entry name" value="EF4_III"/>
    <property type="match status" value="1"/>
</dbReference>
<dbReference type="CDD" id="cd01890">
    <property type="entry name" value="LepA"/>
    <property type="match status" value="1"/>
</dbReference>
<dbReference type="CDD" id="cd03709">
    <property type="entry name" value="lepA_C"/>
    <property type="match status" value="1"/>
</dbReference>
<dbReference type="FunFam" id="3.40.50.300:FF:000078">
    <property type="entry name" value="Elongation factor 4"/>
    <property type="match status" value="1"/>
</dbReference>
<dbReference type="FunFam" id="2.40.30.10:FF:000015">
    <property type="entry name" value="Translation factor GUF1, mitochondrial"/>
    <property type="match status" value="1"/>
</dbReference>
<dbReference type="FunFam" id="3.30.70.240:FF:000007">
    <property type="entry name" value="Translation factor GUF1, mitochondrial"/>
    <property type="match status" value="1"/>
</dbReference>
<dbReference type="FunFam" id="3.30.70.2570:FF:000001">
    <property type="entry name" value="Translation factor GUF1, mitochondrial"/>
    <property type="match status" value="1"/>
</dbReference>
<dbReference type="FunFam" id="3.30.70.870:FF:000004">
    <property type="entry name" value="Translation factor GUF1, mitochondrial"/>
    <property type="match status" value="1"/>
</dbReference>
<dbReference type="Gene3D" id="3.30.70.240">
    <property type="match status" value="1"/>
</dbReference>
<dbReference type="Gene3D" id="3.30.70.2570">
    <property type="entry name" value="Elongation factor 4, C-terminal domain"/>
    <property type="match status" value="1"/>
</dbReference>
<dbReference type="Gene3D" id="3.30.70.870">
    <property type="entry name" value="Elongation Factor G (Translational Gtpase), domain 3"/>
    <property type="match status" value="1"/>
</dbReference>
<dbReference type="Gene3D" id="3.40.50.300">
    <property type="entry name" value="P-loop containing nucleotide triphosphate hydrolases"/>
    <property type="match status" value="1"/>
</dbReference>
<dbReference type="Gene3D" id="2.40.30.10">
    <property type="entry name" value="Translation factors"/>
    <property type="match status" value="1"/>
</dbReference>
<dbReference type="HAMAP" id="MF_00071">
    <property type="entry name" value="LepA"/>
    <property type="match status" value="1"/>
</dbReference>
<dbReference type="InterPro" id="IPR006297">
    <property type="entry name" value="EF-4"/>
</dbReference>
<dbReference type="InterPro" id="IPR035647">
    <property type="entry name" value="EFG_III/V"/>
</dbReference>
<dbReference type="InterPro" id="IPR000640">
    <property type="entry name" value="EFG_V-like"/>
</dbReference>
<dbReference type="InterPro" id="IPR004161">
    <property type="entry name" value="EFTu-like_2"/>
</dbReference>
<dbReference type="InterPro" id="IPR031157">
    <property type="entry name" value="G_TR_CS"/>
</dbReference>
<dbReference type="InterPro" id="IPR038363">
    <property type="entry name" value="LepA_C_sf"/>
</dbReference>
<dbReference type="InterPro" id="IPR013842">
    <property type="entry name" value="LepA_CTD"/>
</dbReference>
<dbReference type="InterPro" id="IPR035654">
    <property type="entry name" value="LepA_IV"/>
</dbReference>
<dbReference type="InterPro" id="IPR027417">
    <property type="entry name" value="P-loop_NTPase"/>
</dbReference>
<dbReference type="InterPro" id="IPR005225">
    <property type="entry name" value="Small_GTP-bd"/>
</dbReference>
<dbReference type="InterPro" id="IPR000795">
    <property type="entry name" value="T_Tr_GTP-bd_dom"/>
</dbReference>
<dbReference type="NCBIfam" id="TIGR01393">
    <property type="entry name" value="lepA"/>
    <property type="match status" value="1"/>
</dbReference>
<dbReference type="NCBIfam" id="TIGR00231">
    <property type="entry name" value="small_GTP"/>
    <property type="match status" value="1"/>
</dbReference>
<dbReference type="PANTHER" id="PTHR43512:SF4">
    <property type="entry name" value="TRANSLATION FACTOR GUF1 HOMOLOG, CHLOROPLASTIC"/>
    <property type="match status" value="1"/>
</dbReference>
<dbReference type="PANTHER" id="PTHR43512">
    <property type="entry name" value="TRANSLATION FACTOR GUF1-RELATED"/>
    <property type="match status" value="1"/>
</dbReference>
<dbReference type="Pfam" id="PF00679">
    <property type="entry name" value="EFG_C"/>
    <property type="match status" value="1"/>
</dbReference>
<dbReference type="Pfam" id="PF00009">
    <property type="entry name" value="GTP_EFTU"/>
    <property type="match status" value="1"/>
</dbReference>
<dbReference type="Pfam" id="PF03144">
    <property type="entry name" value="GTP_EFTU_D2"/>
    <property type="match status" value="1"/>
</dbReference>
<dbReference type="Pfam" id="PF06421">
    <property type="entry name" value="LepA_C"/>
    <property type="match status" value="1"/>
</dbReference>
<dbReference type="PRINTS" id="PR00315">
    <property type="entry name" value="ELONGATNFCT"/>
</dbReference>
<dbReference type="SMART" id="SM00838">
    <property type="entry name" value="EFG_C"/>
    <property type="match status" value="1"/>
</dbReference>
<dbReference type="SUPFAM" id="SSF54980">
    <property type="entry name" value="EF-G C-terminal domain-like"/>
    <property type="match status" value="2"/>
</dbReference>
<dbReference type="SUPFAM" id="SSF52540">
    <property type="entry name" value="P-loop containing nucleoside triphosphate hydrolases"/>
    <property type="match status" value="1"/>
</dbReference>
<dbReference type="PROSITE" id="PS00301">
    <property type="entry name" value="G_TR_1"/>
    <property type="match status" value="1"/>
</dbReference>
<dbReference type="PROSITE" id="PS51722">
    <property type="entry name" value="G_TR_2"/>
    <property type="match status" value="1"/>
</dbReference>